<protein>
    <recommendedName>
        <fullName evidence="1">Glycerol-3-phosphate acyltransferase</fullName>
    </recommendedName>
    <alternativeName>
        <fullName evidence="1">Acyl-PO4 G3P acyltransferase</fullName>
    </alternativeName>
    <alternativeName>
        <fullName evidence="1">Acyl-phosphate--glycerol-3-phosphate acyltransferase</fullName>
    </alternativeName>
    <alternativeName>
        <fullName evidence="1">G3P acyltransferase</fullName>
        <shortName evidence="1">GPAT</shortName>
        <ecNumber evidence="1">2.3.1.275</ecNumber>
    </alternativeName>
    <alternativeName>
        <fullName evidence="1">Lysophosphatidic acid synthase</fullName>
        <shortName evidence="1">LPA synthase</shortName>
    </alternativeName>
</protein>
<gene>
    <name evidence="1" type="primary">plsY</name>
    <name type="ordered locus">CYA_1269</name>
</gene>
<reference key="1">
    <citation type="journal article" date="2007" name="ISME J.">
        <title>Population level functional diversity in a microbial community revealed by comparative genomic and metagenomic analyses.</title>
        <authorList>
            <person name="Bhaya D."/>
            <person name="Grossman A.R."/>
            <person name="Steunou A.-S."/>
            <person name="Khuri N."/>
            <person name="Cohan F.M."/>
            <person name="Hamamura N."/>
            <person name="Melendrez M.C."/>
            <person name="Bateson M.M."/>
            <person name="Ward D.M."/>
            <person name="Heidelberg J.F."/>
        </authorList>
    </citation>
    <scope>NUCLEOTIDE SEQUENCE [LARGE SCALE GENOMIC DNA]</scope>
    <source>
        <strain>JA-3-3Ab</strain>
    </source>
</reference>
<proteinExistence type="inferred from homology"/>
<sequence length="203" mass="20822">MPAWLSALLAALGGYLLGSIPTGYWVGRCWGGIDLRQAGSGSTGATNVLRTVGKGPALLVLLVDAAKGAAAVALGSALGSPWWVVVAALGAVIGHSRSCWLGFKGGKSVATSLGILLAMAWPVALATFGVWLLGIALTRIVSFSSLLAAVAAPLLMWALGQPLPYLLFALAGGVYVIAAHRRNIERLLAGSEPRIGQKWAQSP</sequence>
<evidence type="ECO:0000255" key="1">
    <source>
        <dbReference type="HAMAP-Rule" id="MF_01043"/>
    </source>
</evidence>
<feature type="chain" id="PRO_0000250342" description="Glycerol-3-phosphate acyltransferase">
    <location>
        <begin position="1"/>
        <end position="203"/>
    </location>
</feature>
<feature type="transmembrane region" description="Helical" evidence="1">
    <location>
        <begin position="1"/>
        <end position="21"/>
    </location>
</feature>
<feature type="transmembrane region" description="Helical" evidence="1">
    <location>
        <begin position="52"/>
        <end position="72"/>
    </location>
</feature>
<feature type="transmembrane region" description="Helical" evidence="1">
    <location>
        <begin position="73"/>
        <end position="93"/>
    </location>
</feature>
<feature type="transmembrane region" description="Helical" evidence="1">
    <location>
        <begin position="115"/>
        <end position="135"/>
    </location>
</feature>
<feature type="transmembrane region" description="Helical" evidence="1">
    <location>
        <begin position="140"/>
        <end position="160"/>
    </location>
</feature>
<feature type="transmembrane region" description="Helical" evidence="1">
    <location>
        <begin position="161"/>
        <end position="181"/>
    </location>
</feature>
<comment type="function">
    <text evidence="1">Catalyzes the transfer of an acyl group from acyl-phosphate (acyl-PO(4)) to glycerol-3-phosphate (G3P) to form lysophosphatidic acid (LPA). This enzyme utilizes acyl-phosphate as fatty acyl donor, but not acyl-CoA or acyl-ACP.</text>
</comment>
<comment type="catalytic activity">
    <reaction evidence="1">
        <text>an acyl phosphate + sn-glycerol 3-phosphate = a 1-acyl-sn-glycero-3-phosphate + phosphate</text>
        <dbReference type="Rhea" id="RHEA:34075"/>
        <dbReference type="ChEBI" id="CHEBI:43474"/>
        <dbReference type="ChEBI" id="CHEBI:57597"/>
        <dbReference type="ChEBI" id="CHEBI:57970"/>
        <dbReference type="ChEBI" id="CHEBI:59918"/>
        <dbReference type="EC" id="2.3.1.275"/>
    </reaction>
</comment>
<comment type="pathway">
    <text evidence="1">Lipid metabolism; phospholipid metabolism.</text>
</comment>
<comment type="subunit">
    <text evidence="1">Probably interacts with PlsX.</text>
</comment>
<comment type="subcellular location">
    <subcellularLocation>
        <location evidence="1">Cell inner membrane</location>
        <topology evidence="1">Multi-pass membrane protein</topology>
    </subcellularLocation>
</comment>
<comment type="similarity">
    <text evidence="1">Belongs to the PlsY family.</text>
</comment>
<dbReference type="EC" id="2.3.1.275" evidence="1"/>
<dbReference type="EMBL" id="CP000239">
    <property type="protein sequence ID" value="ABC99451.1"/>
    <property type="molecule type" value="Genomic_DNA"/>
</dbReference>
<dbReference type="RefSeq" id="WP_011430131.1">
    <property type="nucleotide sequence ID" value="NC_007775.1"/>
</dbReference>
<dbReference type="SMR" id="Q2JV01"/>
<dbReference type="STRING" id="321327.CYA_1269"/>
<dbReference type="KEGG" id="cya:CYA_1269"/>
<dbReference type="eggNOG" id="COG0344">
    <property type="taxonomic scope" value="Bacteria"/>
</dbReference>
<dbReference type="HOGENOM" id="CLU_081254_7_1_3"/>
<dbReference type="OrthoDB" id="9777124at2"/>
<dbReference type="UniPathway" id="UPA00085"/>
<dbReference type="Proteomes" id="UP000008818">
    <property type="component" value="Chromosome"/>
</dbReference>
<dbReference type="GO" id="GO:0005886">
    <property type="term" value="C:plasma membrane"/>
    <property type="evidence" value="ECO:0007669"/>
    <property type="project" value="UniProtKB-SubCell"/>
</dbReference>
<dbReference type="GO" id="GO:0043772">
    <property type="term" value="F:acyl-phosphate glycerol-3-phosphate acyltransferase activity"/>
    <property type="evidence" value="ECO:0007669"/>
    <property type="project" value="UniProtKB-UniRule"/>
</dbReference>
<dbReference type="GO" id="GO:0008654">
    <property type="term" value="P:phospholipid biosynthetic process"/>
    <property type="evidence" value="ECO:0007669"/>
    <property type="project" value="UniProtKB-UniRule"/>
</dbReference>
<dbReference type="HAMAP" id="MF_01043">
    <property type="entry name" value="PlsY"/>
    <property type="match status" value="1"/>
</dbReference>
<dbReference type="InterPro" id="IPR003811">
    <property type="entry name" value="G3P_acylTferase_PlsY"/>
</dbReference>
<dbReference type="NCBIfam" id="TIGR00023">
    <property type="entry name" value="glycerol-3-phosphate 1-O-acyltransferase PlsY"/>
    <property type="match status" value="1"/>
</dbReference>
<dbReference type="PANTHER" id="PTHR30309:SF0">
    <property type="entry name" value="GLYCEROL-3-PHOSPHATE ACYLTRANSFERASE-RELATED"/>
    <property type="match status" value="1"/>
</dbReference>
<dbReference type="PANTHER" id="PTHR30309">
    <property type="entry name" value="INNER MEMBRANE PROTEIN YGIH"/>
    <property type="match status" value="1"/>
</dbReference>
<dbReference type="Pfam" id="PF02660">
    <property type="entry name" value="G3P_acyltransf"/>
    <property type="match status" value="1"/>
</dbReference>
<dbReference type="SMART" id="SM01207">
    <property type="entry name" value="G3P_acyltransf"/>
    <property type="match status" value="1"/>
</dbReference>
<keyword id="KW-0997">Cell inner membrane</keyword>
<keyword id="KW-1003">Cell membrane</keyword>
<keyword id="KW-0444">Lipid biosynthesis</keyword>
<keyword id="KW-0443">Lipid metabolism</keyword>
<keyword id="KW-0472">Membrane</keyword>
<keyword id="KW-0594">Phospholipid biosynthesis</keyword>
<keyword id="KW-1208">Phospholipid metabolism</keyword>
<keyword id="KW-0808">Transferase</keyword>
<keyword id="KW-0812">Transmembrane</keyword>
<keyword id="KW-1133">Transmembrane helix</keyword>
<organism>
    <name type="scientific">Synechococcus sp. (strain JA-3-3Ab)</name>
    <name type="common">Cyanobacteria bacterium Yellowstone A-Prime</name>
    <dbReference type="NCBI Taxonomy" id="321327"/>
    <lineage>
        <taxon>Bacteria</taxon>
        <taxon>Bacillati</taxon>
        <taxon>Cyanobacteriota</taxon>
        <taxon>Cyanophyceae</taxon>
        <taxon>Synechococcales</taxon>
        <taxon>Synechococcaceae</taxon>
        <taxon>Synechococcus</taxon>
    </lineage>
</organism>
<name>PLSY_SYNJA</name>
<accession>Q2JV01</accession>